<comment type="function">
    <text evidence="3">Plays an olfactory role that is not restricted to pheromone sensitivity.</text>
</comment>
<comment type="subcellular location">
    <subcellularLocation>
        <location evidence="1">Cell membrane</location>
        <topology evidence="1">Multi-pass membrane protein</topology>
    </subcellularLocation>
</comment>
<comment type="similarity">
    <text evidence="5">Belongs to the CD36 family.</text>
</comment>
<accession>E0W3E3</accession>
<feature type="chain" id="PRO_0000408255" description="Sensory neuron membrane protein 1">
    <location>
        <begin position="1"/>
        <end position="518"/>
    </location>
</feature>
<feature type="topological domain" description="Cytoplasmic" evidence="4">
    <location>
        <begin position="1"/>
        <end position="8"/>
    </location>
</feature>
<feature type="transmembrane region" description="Helical" evidence="4">
    <location>
        <begin position="9"/>
        <end position="29"/>
    </location>
</feature>
<feature type="topological domain" description="Extracellular" evidence="4">
    <location>
        <begin position="30"/>
        <end position="456"/>
    </location>
</feature>
<feature type="transmembrane region" description="Helical" evidence="4">
    <location>
        <begin position="457"/>
        <end position="477"/>
    </location>
</feature>
<feature type="topological domain" description="Cytoplasmic" evidence="4">
    <location>
        <begin position="478"/>
        <end position="518"/>
    </location>
</feature>
<feature type="glycosylation site" description="N-linked (GlcNAc...) asparagine" evidence="4">
    <location>
        <position position="64"/>
    </location>
</feature>
<feature type="glycosylation site" description="N-linked (GlcNAc...) asparagine" evidence="4">
    <location>
        <position position="186"/>
    </location>
</feature>
<feature type="glycosylation site" description="N-linked (GlcNAc...) asparagine" evidence="4">
    <location>
        <position position="225"/>
    </location>
</feature>
<feature type="glycosylation site" description="N-linked (GlcNAc...) asparagine" evidence="4">
    <location>
        <position position="316"/>
    </location>
</feature>
<feature type="glycosylation site" description="N-linked (GlcNAc...) asparagine" evidence="4">
    <location>
        <position position="334"/>
    </location>
</feature>
<feature type="glycosylation site" description="N-linked (GlcNAc...) asparagine" evidence="4">
    <location>
        <position position="381"/>
    </location>
</feature>
<feature type="disulfide bond" evidence="2">
    <location>
        <begin position="265"/>
        <end position="330"/>
    </location>
</feature>
<feature type="disulfide bond" evidence="2">
    <location>
        <begin position="294"/>
        <end position="349"/>
    </location>
</feature>
<feature type="disulfide bond" evidence="2">
    <location>
        <begin position="332"/>
        <end position="338"/>
    </location>
</feature>
<evidence type="ECO:0000250" key="1">
    <source>
        <dbReference type="UniProtKB" id="O02351"/>
    </source>
</evidence>
<evidence type="ECO:0000250" key="2">
    <source>
        <dbReference type="UniProtKB" id="P26201"/>
    </source>
</evidence>
<evidence type="ECO:0000250" key="3">
    <source>
        <dbReference type="UniProtKB" id="Q9VDD3"/>
    </source>
</evidence>
<evidence type="ECO:0000255" key="4"/>
<evidence type="ECO:0000305" key="5"/>
<evidence type="ECO:0000312" key="6">
    <source>
        <dbReference type="EMBL" id="EEB20149.1"/>
    </source>
</evidence>
<dbReference type="EMBL" id="DS235882">
    <property type="protein sequence ID" value="EEB20149.1"/>
    <property type="molecule type" value="Genomic_DNA"/>
</dbReference>
<dbReference type="RefSeq" id="XP_002432887.1">
    <property type="nucleotide sequence ID" value="XM_002432842.1"/>
</dbReference>
<dbReference type="SMR" id="E0W3E3"/>
<dbReference type="STRING" id="121224.E0W3E3"/>
<dbReference type="EnsemblMetazoa" id="PHUM603690-RA">
    <property type="protein sequence ID" value="PHUM603690-PA"/>
    <property type="gene ID" value="PHUM603690"/>
</dbReference>
<dbReference type="KEGG" id="phu:Phum_PHUM603690"/>
<dbReference type="CTD" id="8237028"/>
<dbReference type="VEuPathDB" id="VectorBase:PHUM603690"/>
<dbReference type="eggNOG" id="KOG3776">
    <property type="taxonomic scope" value="Eukaryota"/>
</dbReference>
<dbReference type="HOGENOM" id="CLU_019853_1_2_1"/>
<dbReference type="InParanoid" id="E0W3E3"/>
<dbReference type="OMA" id="QRKSSYH"/>
<dbReference type="OrthoDB" id="10024078at2759"/>
<dbReference type="PhylomeDB" id="E0W3E3"/>
<dbReference type="Proteomes" id="UP000009046">
    <property type="component" value="Unassembled WGS sequence"/>
</dbReference>
<dbReference type="GO" id="GO:0005737">
    <property type="term" value="C:cytoplasm"/>
    <property type="evidence" value="ECO:0007669"/>
    <property type="project" value="TreeGrafter"/>
</dbReference>
<dbReference type="GO" id="GO:0005886">
    <property type="term" value="C:plasma membrane"/>
    <property type="evidence" value="ECO:0007669"/>
    <property type="project" value="UniProtKB-SubCell"/>
</dbReference>
<dbReference type="GO" id="GO:0005044">
    <property type="term" value="F:scavenger receptor activity"/>
    <property type="evidence" value="ECO:0007669"/>
    <property type="project" value="TreeGrafter"/>
</dbReference>
<dbReference type="GO" id="GO:0007608">
    <property type="term" value="P:sensory perception of smell"/>
    <property type="evidence" value="ECO:0007669"/>
    <property type="project" value="UniProtKB-KW"/>
</dbReference>
<dbReference type="InterPro" id="IPR002159">
    <property type="entry name" value="CD36_fam"/>
</dbReference>
<dbReference type="PANTHER" id="PTHR11923">
    <property type="entry name" value="SCAVENGER RECEPTOR CLASS B TYPE-1 SR-B1"/>
    <property type="match status" value="1"/>
</dbReference>
<dbReference type="PANTHER" id="PTHR11923:SF69">
    <property type="entry name" value="SENSORY NEURON MEMBRANE PROTEIN 1"/>
    <property type="match status" value="1"/>
</dbReference>
<dbReference type="Pfam" id="PF01130">
    <property type="entry name" value="CD36"/>
    <property type="match status" value="1"/>
</dbReference>
<dbReference type="PRINTS" id="PR01609">
    <property type="entry name" value="CD36FAMILY"/>
</dbReference>
<organism>
    <name type="scientific">Pediculus humanus subsp. corporis</name>
    <name type="common">Body louse</name>
    <dbReference type="NCBI Taxonomy" id="121224"/>
    <lineage>
        <taxon>Eukaryota</taxon>
        <taxon>Metazoa</taxon>
        <taxon>Ecdysozoa</taxon>
        <taxon>Arthropoda</taxon>
        <taxon>Hexapoda</taxon>
        <taxon>Insecta</taxon>
        <taxon>Pterygota</taxon>
        <taxon>Neoptera</taxon>
        <taxon>Paraneoptera</taxon>
        <taxon>Psocodea</taxon>
        <taxon>Phthiraptera</taxon>
        <taxon>Anoplura</taxon>
        <taxon>Pediculidae</taxon>
        <taxon>Pediculus</taxon>
    </lineage>
</organism>
<name>SNMP1_PEDHC</name>
<keyword id="KW-1003">Cell membrane</keyword>
<keyword id="KW-1015">Disulfide bond</keyword>
<keyword id="KW-0325">Glycoprotein</keyword>
<keyword id="KW-0472">Membrane</keyword>
<keyword id="KW-0552">Olfaction</keyword>
<keyword id="KW-0675">Receptor</keyword>
<keyword id="KW-1185">Reference proteome</keyword>
<keyword id="KW-0716">Sensory transduction</keyword>
<keyword id="KW-0812">Transmembrane</keyword>
<keyword id="KW-1133">Transmembrane helix</keyword>
<proteinExistence type="inferred from homology"/>
<sequence>MKTAEKLGIIGTTISIFGIGFGWGVFPWLIRMQIGRVSLSPGSETREFWEKIPFPIDFKIHIFNITNHVEVQNEGKIPNLQEIGPYYYKEWKEKSEMIDYENDDSITFFMKNTWFDNKEKTLPLTGDEMVIIPNPILVGLITAAEREKKGVLPMINKAIPILFNKPDSVFLKIKVYDLLFGGIIFNCTTKDFSASAVCAVLKKEAPFLETVSRSVFKFSILNQKNGTEEPLKLQIKRGIKDYTEVGKVIGANGKNKLTNWRGRPCNNLEGTDGTIFPSDISEHQDIWSFNLELCRSIPAKFVRKSEYKGIPAFRYNVTIGDTSTDPSLKCLCINDTFCWKKGAMELLKCSGLPVVATLPHFYDSHEDFLNGVKGLSPNEENHSIFFDIEPMTGTPLYAKKRIQFSFPLGKINKIDLTKNLPDTLLPFLWVEESIELPDYLIDKLNSELFRILQFLDVIKWVITLFGAGVVSGGVGLYYKEKNSLPITPTSSATSKKIDNPTDKTTTHELGHTNFGYIN</sequence>
<gene>
    <name type="ORF">PHUM603690</name>
</gene>
<reference evidence="6" key="1">
    <citation type="journal article" date="2010" name="Proc. Natl. Acad. Sci. U.S.A.">
        <title>Genome sequences of the human body louse and its primary endosymbiont provide insights into the permanent parasitic lifestyle.</title>
        <authorList>
            <person name="Kirkness E.F."/>
            <person name="Haas B.J."/>
            <person name="Sun W."/>
            <person name="Braig H.R."/>
            <person name="Perotti M.A."/>
            <person name="Clark J.M."/>
            <person name="Lee S.H."/>
            <person name="Robertson H.M."/>
            <person name="Kennedy R.C."/>
            <person name="Elhaik E."/>
            <person name="Gerlach D."/>
            <person name="Kriventseva E.V."/>
            <person name="Elsik C.G."/>
            <person name="Graur D."/>
            <person name="Hill C.A."/>
            <person name="Veenstra J.A."/>
            <person name="Walenz B."/>
            <person name="Tubio J.M."/>
            <person name="Ribeiro J.M."/>
            <person name="Rozas J."/>
            <person name="Johnston J.S."/>
            <person name="Reese J.T."/>
            <person name="Popadic A."/>
            <person name="Tojo M."/>
            <person name="Raoult D."/>
            <person name="Reed D.L."/>
            <person name="Tomoyasu Y."/>
            <person name="Krause E."/>
            <person name="Mittapalli O."/>
            <person name="Margam V.M."/>
            <person name="Li H.M."/>
            <person name="Meyer J.M."/>
            <person name="Johnson R.M."/>
            <person name="Romero-Severson J."/>
            <person name="Vanzee J.P."/>
            <person name="Alvarez-Ponce D."/>
            <person name="Vieira F.G."/>
            <person name="Aguade M."/>
            <person name="Guirao-Rico S."/>
            <person name="Anzola J.M."/>
            <person name="Yoon K.S."/>
            <person name="Strycharz J.P."/>
            <person name="Unger M.F."/>
            <person name="Christley S."/>
            <person name="Lobo N.F."/>
            <person name="Seufferheld M.J."/>
            <person name="Wang N."/>
            <person name="Dasch G.A."/>
            <person name="Struchiner C.J."/>
            <person name="Madey G."/>
            <person name="Hannick L.I."/>
            <person name="Bidwell S."/>
            <person name="Joardar V."/>
            <person name="Caler E."/>
            <person name="Shao R."/>
            <person name="Barker S.C."/>
            <person name="Cameron S."/>
            <person name="Bruggner R.V."/>
            <person name="Regier A."/>
            <person name="Johnson J."/>
            <person name="Viswanathan L."/>
            <person name="Utterback T.R."/>
            <person name="Sutton G.G."/>
            <person name="Lawson D."/>
            <person name="Waterhouse R.M."/>
            <person name="Venter J.C."/>
            <person name="Strausberg R.L."/>
            <person name="Berenbaum M.R."/>
            <person name="Collins F.H."/>
            <person name="Zdobnov E.M."/>
            <person name="Pittendrigh B.R."/>
        </authorList>
    </citation>
    <scope>NUCLEOTIDE SEQUENCE [LARGE SCALE GENOMIC DNA]</scope>
    <source>
        <strain>USDA</strain>
    </source>
</reference>
<protein>
    <recommendedName>
        <fullName evidence="3">Sensory neuron membrane protein 1</fullName>
    </recommendedName>
</protein>